<protein>
    <recommendedName>
        <fullName>Angiopoietin-related protein 1</fullName>
    </recommendedName>
    <alternativeName>
        <fullName>Angiopoietin-3</fullName>
        <shortName>ANG-3</shortName>
    </alternativeName>
    <alternativeName>
        <fullName>Angiopoietin-like protein 1</fullName>
    </alternativeName>
</protein>
<proteinExistence type="evidence at protein level"/>
<sequence length="491" mass="56720">MKTFTWTLGVLFFLLVDTGHCRGGQFKIKKINQRRYPRATDGKEEAKKCAYTFLVPEQRITGPICVNTKGQDASTIKDMITRMDLENLKDVLSRQKREIDVLQLVVDVDGNIVNEVKLLRKESRNMNSRVTQLYMQLLHEIIRKRDNSLELSQLENKILNVTTEMLKMATRYRELEVKYASLTDLVNNQSVMITLLEEQCLRIFSRQDTHVSPPLVQVVPQHIPNSQQYTPGLLGGNEIQRDPGYPRDLMPPPDLATSPTKSPFKIPPVTFINEGPFKDCQQAKEAGHSVSGIYMIKPENSNGPMQLWCENSLDPGGWTVIQKRTDGSVNFFRNWENYKKGFGNIDGEYWLGLENIYMLSNQDNYKLLIELEDWSDKKVYAEYSSFRLEPESEFYRLRLGTYQGNAGDSMMWHNGKQFTTLDRDKDMYAGNCAHFHKGGWWYNACAHSNLNGVWYRGGHYRSKHQDGIFWAEYRGGSYSLRAVQMMIKPID</sequence>
<comment type="subcellular location">
    <subcellularLocation>
        <location evidence="3">Secreted</location>
    </subcellularLocation>
</comment>
<comment type="tissue specificity">
    <text evidence="3">Highly expressed in adrenal gland, placenta, thyroid gland, heart, skeletal muscle and small intestine. Weakly expressed in testis, ovary, colon, pancreas, kidney and stomach.</text>
</comment>
<feature type="signal peptide" evidence="1">
    <location>
        <begin position="1"/>
        <end position="23"/>
    </location>
</feature>
<feature type="chain" id="PRO_0000009118" description="Angiopoietin-related protein 1">
    <location>
        <begin position="24"/>
        <end position="491"/>
    </location>
</feature>
<feature type="domain" description="Fibrinogen C-terminal" evidence="2">
    <location>
        <begin position="271"/>
        <end position="491"/>
    </location>
</feature>
<feature type="coiled-coil region" evidence="1">
    <location>
        <begin position="80"/>
        <end position="168"/>
    </location>
</feature>
<feature type="glycosylation site" description="N-linked (GlcNAc...) asparagine" evidence="1">
    <location>
        <position position="160"/>
    </location>
</feature>
<feature type="glycosylation site" description="N-linked (GlcNAc...) asparagine" evidence="1">
    <location>
        <position position="188"/>
    </location>
</feature>
<feature type="disulfide bond" evidence="2">
    <location>
        <begin position="280"/>
        <end position="309"/>
    </location>
</feature>
<feature type="disulfide bond" evidence="2">
    <location>
        <begin position="432"/>
        <end position="445"/>
    </location>
</feature>
<evidence type="ECO:0000255" key="1"/>
<evidence type="ECO:0000255" key="2">
    <source>
        <dbReference type="PROSITE-ProRule" id="PRU00739"/>
    </source>
</evidence>
<evidence type="ECO:0000269" key="3">
    <source>
    </source>
</evidence>
<reference key="1">
    <citation type="journal article" date="1999" name="FEBS Lett.">
        <title>Molecular cloning and characterization of a novel angiopoietin family protein, angiopoietin-3.</title>
        <authorList>
            <person name="Kim I."/>
            <person name="Kwak H.J."/>
            <person name="Ahn J.E."/>
            <person name="So J.-N."/>
            <person name="Liu M."/>
            <person name="Koh K.N."/>
            <person name="Koh G.Y."/>
        </authorList>
    </citation>
    <scope>NUCLEOTIDE SEQUENCE [MRNA]</scope>
    <scope>SUBCELLULAR LOCATION</scope>
    <scope>TISSUE SPECIFICITY</scope>
    <source>
        <tissue>Heart</tissue>
    </source>
</reference>
<reference key="2">
    <citation type="journal article" date="2003" name="Genome Res.">
        <title>The secreted protein discovery initiative (SPDI), a large-scale effort to identify novel human secreted and transmembrane proteins: a bioinformatics assessment.</title>
        <authorList>
            <person name="Clark H.F."/>
            <person name="Gurney A.L."/>
            <person name="Abaya E."/>
            <person name="Baker K."/>
            <person name="Baldwin D.T."/>
            <person name="Brush J."/>
            <person name="Chen J."/>
            <person name="Chow B."/>
            <person name="Chui C."/>
            <person name="Crowley C."/>
            <person name="Currell B."/>
            <person name="Deuel B."/>
            <person name="Dowd P."/>
            <person name="Eaton D."/>
            <person name="Foster J.S."/>
            <person name="Grimaldi C."/>
            <person name="Gu Q."/>
            <person name="Hass P.E."/>
            <person name="Heldens S."/>
            <person name="Huang A."/>
            <person name="Kim H.S."/>
            <person name="Klimowski L."/>
            <person name="Jin Y."/>
            <person name="Johnson S."/>
            <person name="Lee J."/>
            <person name="Lewis L."/>
            <person name="Liao D."/>
            <person name="Mark M.R."/>
            <person name="Robbie E."/>
            <person name="Sanchez C."/>
            <person name="Schoenfeld J."/>
            <person name="Seshagiri S."/>
            <person name="Simmons L."/>
            <person name="Singh J."/>
            <person name="Smith V."/>
            <person name="Stinson J."/>
            <person name="Vagts A."/>
            <person name="Vandlen R.L."/>
            <person name="Watanabe C."/>
            <person name="Wieand D."/>
            <person name="Woods K."/>
            <person name="Xie M.-H."/>
            <person name="Yansura D.G."/>
            <person name="Yi S."/>
            <person name="Yu G."/>
            <person name="Yuan J."/>
            <person name="Zhang M."/>
            <person name="Zhang Z."/>
            <person name="Goddard A.D."/>
            <person name="Wood W.I."/>
            <person name="Godowski P.J."/>
            <person name="Gray A.M."/>
        </authorList>
    </citation>
    <scope>NUCLEOTIDE SEQUENCE [LARGE SCALE MRNA]</scope>
</reference>
<reference key="3">
    <citation type="journal article" date="2005" name="DNA Res.">
        <title>Signal sequence and keyword trap in silico for selection of full-length human cDNAs encoding secretion or membrane proteins from oligo-capped cDNA libraries.</title>
        <authorList>
            <person name="Otsuki T."/>
            <person name="Ota T."/>
            <person name="Nishikawa T."/>
            <person name="Hayashi K."/>
            <person name="Suzuki Y."/>
            <person name="Yamamoto J."/>
            <person name="Wakamatsu A."/>
            <person name="Kimura K."/>
            <person name="Sakamoto K."/>
            <person name="Hatano N."/>
            <person name="Kawai Y."/>
            <person name="Ishii S."/>
            <person name="Saito K."/>
            <person name="Kojima S."/>
            <person name="Sugiyama T."/>
            <person name="Ono T."/>
            <person name="Okano K."/>
            <person name="Yoshikawa Y."/>
            <person name="Aotsuka S."/>
            <person name="Sasaki N."/>
            <person name="Hattori A."/>
            <person name="Okumura K."/>
            <person name="Nagai K."/>
            <person name="Sugano S."/>
            <person name="Isogai T."/>
        </authorList>
    </citation>
    <scope>NUCLEOTIDE SEQUENCE [LARGE SCALE MRNA]</scope>
    <source>
        <tissue>Placenta</tissue>
    </source>
</reference>
<reference key="4">
    <citation type="journal article" date="2006" name="Nature">
        <title>The DNA sequence and biological annotation of human chromosome 1.</title>
        <authorList>
            <person name="Gregory S.G."/>
            <person name="Barlow K.F."/>
            <person name="McLay K.E."/>
            <person name="Kaul R."/>
            <person name="Swarbreck D."/>
            <person name="Dunham A."/>
            <person name="Scott C.E."/>
            <person name="Howe K.L."/>
            <person name="Woodfine K."/>
            <person name="Spencer C.C.A."/>
            <person name="Jones M.C."/>
            <person name="Gillson C."/>
            <person name="Searle S."/>
            <person name="Zhou Y."/>
            <person name="Kokocinski F."/>
            <person name="McDonald L."/>
            <person name="Evans R."/>
            <person name="Phillips K."/>
            <person name="Atkinson A."/>
            <person name="Cooper R."/>
            <person name="Jones C."/>
            <person name="Hall R.E."/>
            <person name="Andrews T.D."/>
            <person name="Lloyd C."/>
            <person name="Ainscough R."/>
            <person name="Almeida J.P."/>
            <person name="Ambrose K.D."/>
            <person name="Anderson F."/>
            <person name="Andrew R.W."/>
            <person name="Ashwell R.I.S."/>
            <person name="Aubin K."/>
            <person name="Babbage A.K."/>
            <person name="Bagguley C.L."/>
            <person name="Bailey J."/>
            <person name="Beasley H."/>
            <person name="Bethel G."/>
            <person name="Bird C.P."/>
            <person name="Bray-Allen S."/>
            <person name="Brown J.Y."/>
            <person name="Brown A.J."/>
            <person name="Buckley D."/>
            <person name="Burton J."/>
            <person name="Bye J."/>
            <person name="Carder C."/>
            <person name="Chapman J.C."/>
            <person name="Clark S.Y."/>
            <person name="Clarke G."/>
            <person name="Clee C."/>
            <person name="Cobley V."/>
            <person name="Collier R.E."/>
            <person name="Corby N."/>
            <person name="Coville G.J."/>
            <person name="Davies J."/>
            <person name="Deadman R."/>
            <person name="Dunn M."/>
            <person name="Earthrowl M."/>
            <person name="Ellington A.G."/>
            <person name="Errington H."/>
            <person name="Frankish A."/>
            <person name="Frankland J."/>
            <person name="French L."/>
            <person name="Garner P."/>
            <person name="Garnett J."/>
            <person name="Gay L."/>
            <person name="Ghori M.R.J."/>
            <person name="Gibson R."/>
            <person name="Gilby L.M."/>
            <person name="Gillett W."/>
            <person name="Glithero R.J."/>
            <person name="Grafham D.V."/>
            <person name="Griffiths C."/>
            <person name="Griffiths-Jones S."/>
            <person name="Grocock R."/>
            <person name="Hammond S."/>
            <person name="Harrison E.S.I."/>
            <person name="Hart E."/>
            <person name="Haugen E."/>
            <person name="Heath P.D."/>
            <person name="Holmes S."/>
            <person name="Holt K."/>
            <person name="Howden P.J."/>
            <person name="Hunt A.R."/>
            <person name="Hunt S.E."/>
            <person name="Hunter G."/>
            <person name="Isherwood J."/>
            <person name="James R."/>
            <person name="Johnson C."/>
            <person name="Johnson D."/>
            <person name="Joy A."/>
            <person name="Kay M."/>
            <person name="Kershaw J.K."/>
            <person name="Kibukawa M."/>
            <person name="Kimberley A.M."/>
            <person name="King A."/>
            <person name="Knights A.J."/>
            <person name="Lad H."/>
            <person name="Laird G."/>
            <person name="Lawlor S."/>
            <person name="Leongamornlert D.A."/>
            <person name="Lloyd D.M."/>
            <person name="Loveland J."/>
            <person name="Lovell J."/>
            <person name="Lush M.J."/>
            <person name="Lyne R."/>
            <person name="Martin S."/>
            <person name="Mashreghi-Mohammadi M."/>
            <person name="Matthews L."/>
            <person name="Matthews N.S.W."/>
            <person name="McLaren S."/>
            <person name="Milne S."/>
            <person name="Mistry S."/>
            <person name="Moore M.J.F."/>
            <person name="Nickerson T."/>
            <person name="O'Dell C.N."/>
            <person name="Oliver K."/>
            <person name="Palmeiri A."/>
            <person name="Palmer S.A."/>
            <person name="Parker A."/>
            <person name="Patel D."/>
            <person name="Pearce A.V."/>
            <person name="Peck A.I."/>
            <person name="Pelan S."/>
            <person name="Phelps K."/>
            <person name="Phillimore B.J."/>
            <person name="Plumb R."/>
            <person name="Rajan J."/>
            <person name="Raymond C."/>
            <person name="Rouse G."/>
            <person name="Saenphimmachak C."/>
            <person name="Sehra H.K."/>
            <person name="Sheridan E."/>
            <person name="Shownkeen R."/>
            <person name="Sims S."/>
            <person name="Skuce C.D."/>
            <person name="Smith M."/>
            <person name="Steward C."/>
            <person name="Subramanian S."/>
            <person name="Sycamore N."/>
            <person name="Tracey A."/>
            <person name="Tromans A."/>
            <person name="Van Helmond Z."/>
            <person name="Wall M."/>
            <person name="Wallis J.M."/>
            <person name="White S."/>
            <person name="Whitehead S.L."/>
            <person name="Wilkinson J.E."/>
            <person name="Willey D.L."/>
            <person name="Williams H."/>
            <person name="Wilming L."/>
            <person name="Wray P.W."/>
            <person name="Wu Z."/>
            <person name="Coulson A."/>
            <person name="Vaudin M."/>
            <person name="Sulston J.E."/>
            <person name="Durbin R.M."/>
            <person name="Hubbard T."/>
            <person name="Wooster R."/>
            <person name="Dunham I."/>
            <person name="Carter N.P."/>
            <person name="McVean G."/>
            <person name="Ross M.T."/>
            <person name="Harrow J."/>
            <person name="Olson M.V."/>
            <person name="Beck S."/>
            <person name="Rogers J."/>
            <person name="Bentley D.R."/>
        </authorList>
    </citation>
    <scope>NUCLEOTIDE SEQUENCE [LARGE SCALE GENOMIC DNA]</scope>
</reference>
<reference key="5">
    <citation type="journal article" date="2004" name="Genome Res.">
        <title>The status, quality, and expansion of the NIH full-length cDNA project: the Mammalian Gene Collection (MGC).</title>
        <authorList>
            <consortium name="The MGC Project Team"/>
        </authorList>
    </citation>
    <scope>NUCLEOTIDE SEQUENCE [LARGE SCALE MRNA]</scope>
    <source>
        <tissue>Ovary</tissue>
    </source>
</reference>
<name>ANGL1_HUMAN</name>
<gene>
    <name type="primary">ANGPTL1</name>
    <name type="synonym">ANG3</name>
    <name type="synonym">ANGPT3</name>
    <name type="synonym">ARP1</name>
    <name type="ORF">PSEC0154</name>
    <name type="ORF">UNQ162/PRO188</name>
</gene>
<keyword id="KW-0175">Coiled coil</keyword>
<keyword id="KW-1015">Disulfide bond</keyword>
<keyword id="KW-0325">Glycoprotein</keyword>
<keyword id="KW-1267">Proteomics identification</keyword>
<keyword id="KW-1185">Reference proteome</keyword>
<keyword id="KW-0964">Secreted</keyword>
<keyword id="KW-0732">Signal</keyword>
<dbReference type="EMBL" id="AF107253">
    <property type="protein sequence ID" value="AAD19608.1"/>
    <property type="molecule type" value="mRNA"/>
</dbReference>
<dbReference type="EMBL" id="AY358278">
    <property type="protein sequence ID" value="AAQ88645.1"/>
    <property type="molecule type" value="mRNA"/>
</dbReference>
<dbReference type="EMBL" id="AB056476">
    <property type="protein sequence ID" value="BAB40691.1"/>
    <property type="molecule type" value="mRNA"/>
</dbReference>
<dbReference type="EMBL" id="AL355520">
    <property type="status" value="NOT_ANNOTATED_CDS"/>
    <property type="molecule type" value="Genomic_DNA"/>
</dbReference>
<dbReference type="EMBL" id="BC050640">
    <property type="protein sequence ID" value="AAH50640.1"/>
    <property type="molecule type" value="mRNA"/>
</dbReference>
<dbReference type="CCDS" id="CCDS1327.1"/>
<dbReference type="RefSeq" id="NP_001363692.1">
    <property type="nucleotide sequence ID" value="NM_001376763.1"/>
</dbReference>
<dbReference type="RefSeq" id="NP_004664.1">
    <property type="nucleotide sequence ID" value="NM_004673.4"/>
</dbReference>
<dbReference type="RefSeq" id="XP_005245634.1">
    <property type="nucleotide sequence ID" value="XM_005245577.2"/>
</dbReference>
<dbReference type="RefSeq" id="XP_047289667.1">
    <property type="nucleotide sequence ID" value="XM_047433711.1"/>
</dbReference>
<dbReference type="RefSeq" id="XP_054195493.1">
    <property type="nucleotide sequence ID" value="XM_054339518.1"/>
</dbReference>
<dbReference type="SMR" id="O95841"/>
<dbReference type="BioGRID" id="114526">
    <property type="interactions" value="1"/>
</dbReference>
<dbReference type="FunCoup" id="O95841">
    <property type="interactions" value="130"/>
</dbReference>
<dbReference type="STRING" id="9606.ENSP00000234816"/>
<dbReference type="GlyCosmos" id="O95841">
    <property type="glycosylation" value="2 sites, No reported glycans"/>
</dbReference>
<dbReference type="GlyGen" id="O95841">
    <property type="glycosylation" value="2 sites, 2 N-linked glycans (1 site)"/>
</dbReference>
<dbReference type="iPTMnet" id="O95841"/>
<dbReference type="PhosphoSitePlus" id="O95841"/>
<dbReference type="BioMuta" id="ANGPTL1"/>
<dbReference type="jPOST" id="O95841"/>
<dbReference type="MassIVE" id="O95841"/>
<dbReference type="PaxDb" id="9606-ENSP00000234816"/>
<dbReference type="PeptideAtlas" id="O95841"/>
<dbReference type="ProteomicsDB" id="51085"/>
<dbReference type="Antibodypedia" id="1217">
    <property type="antibodies" value="420 antibodies from 30 providers"/>
</dbReference>
<dbReference type="DNASU" id="9068"/>
<dbReference type="Ensembl" id="ENST00000234816.7">
    <property type="protein sequence ID" value="ENSP00000234816.2"/>
    <property type="gene ID" value="ENSG00000116194.13"/>
</dbReference>
<dbReference type="Ensembl" id="ENST00000367629.1">
    <property type="protein sequence ID" value="ENSP00000356601.1"/>
    <property type="gene ID" value="ENSG00000116194.13"/>
</dbReference>
<dbReference type="GeneID" id="9068"/>
<dbReference type="KEGG" id="hsa:9068"/>
<dbReference type="MANE-Select" id="ENST00000234816.7">
    <property type="protein sequence ID" value="ENSP00000234816.2"/>
    <property type="RefSeq nucleotide sequence ID" value="NM_004673.4"/>
    <property type="RefSeq protein sequence ID" value="NP_004664.1"/>
</dbReference>
<dbReference type="UCSC" id="uc001gma.4">
    <property type="organism name" value="human"/>
</dbReference>
<dbReference type="AGR" id="HGNC:489"/>
<dbReference type="CTD" id="9068"/>
<dbReference type="DisGeNET" id="9068"/>
<dbReference type="GeneCards" id="ANGPTL1"/>
<dbReference type="HGNC" id="HGNC:489">
    <property type="gene designation" value="ANGPTL1"/>
</dbReference>
<dbReference type="HPA" id="ENSG00000116194">
    <property type="expression patterns" value="Tissue enhanced (placenta)"/>
</dbReference>
<dbReference type="MIM" id="603874">
    <property type="type" value="gene"/>
</dbReference>
<dbReference type="neXtProt" id="NX_O95841"/>
<dbReference type="OpenTargets" id="ENSG00000116194"/>
<dbReference type="PharmGKB" id="PA24794"/>
<dbReference type="VEuPathDB" id="HostDB:ENSG00000116194"/>
<dbReference type="eggNOG" id="KOG2579">
    <property type="taxonomic scope" value="Eukaryota"/>
</dbReference>
<dbReference type="GeneTree" id="ENSGT00940000155091"/>
<dbReference type="HOGENOM" id="CLU_038628_0_0_1"/>
<dbReference type="InParanoid" id="O95841"/>
<dbReference type="OMA" id="CQHAKDA"/>
<dbReference type="OrthoDB" id="7871457at2759"/>
<dbReference type="PAN-GO" id="O95841">
    <property type="GO annotations" value="4 GO annotations based on evolutionary models"/>
</dbReference>
<dbReference type="PhylomeDB" id="O95841"/>
<dbReference type="TreeFam" id="TF336658"/>
<dbReference type="PathwayCommons" id="O95841"/>
<dbReference type="SignaLink" id="O95841"/>
<dbReference type="SIGNOR" id="O95841"/>
<dbReference type="BioGRID-ORCS" id="9068">
    <property type="hits" value="11 hits in 1154 CRISPR screens"/>
</dbReference>
<dbReference type="ChiTaRS" id="ANGPTL1">
    <property type="organism name" value="human"/>
</dbReference>
<dbReference type="GeneWiki" id="ANGPTL1"/>
<dbReference type="GenomeRNAi" id="9068"/>
<dbReference type="Pharos" id="O95841">
    <property type="development level" value="Tbio"/>
</dbReference>
<dbReference type="PRO" id="PR:O95841"/>
<dbReference type="Proteomes" id="UP000005640">
    <property type="component" value="Chromosome 1"/>
</dbReference>
<dbReference type="RNAct" id="O95841">
    <property type="molecule type" value="protein"/>
</dbReference>
<dbReference type="Bgee" id="ENSG00000116194">
    <property type="expression patterns" value="Expressed in left uterine tube and 158 other cell types or tissues"/>
</dbReference>
<dbReference type="ExpressionAtlas" id="O95841">
    <property type="expression patterns" value="baseline and differential"/>
</dbReference>
<dbReference type="GO" id="GO:0062023">
    <property type="term" value="C:collagen-containing extracellular matrix"/>
    <property type="evidence" value="ECO:0000318"/>
    <property type="project" value="GO_Central"/>
</dbReference>
<dbReference type="GO" id="GO:0070062">
    <property type="term" value="C:extracellular exosome"/>
    <property type="evidence" value="ECO:0007005"/>
    <property type="project" value="UniProtKB"/>
</dbReference>
<dbReference type="GO" id="GO:0005615">
    <property type="term" value="C:extracellular space"/>
    <property type="evidence" value="ECO:0000314"/>
    <property type="project" value="MGI"/>
</dbReference>
<dbReference type="GO" id="GO:0005102">
    <property type="term" value="F:signaling receptor binding"/>
    <property type="evidence" value="ECO:0000318"/>
    <property type="project" value="GO_Central"/>
</dbReference>
<dbReference type="GO" id="GO:0007596">
    <property type="term" value="P:blood coagulation"/>
    <property type="evidence" value="ECO:0007669"/>
    <property type="project" value="InterPro"/>
</dbReference>
<dbReference type="GO" id="GO:0007169">
    <property type="term" value="P:cell surface receptor protein tyrosine kinase signaling pathway"/>
    <property type="evidence" value="ECO:0000318"/>
    <property type="project" value="GO_Central"/>
</dbReference>
<dbReference type="CDD" id="cd00087">
    <property type="entry name" value="FReD"/>
    <property type="match status" value="1"/>
</dbReference>
<dbReference type="FunFam" id="3.90.215.10:FF:000001">
    <property type="entry name" value="Tenascin isoform 1"/>
    <property type="match status" value="1"/>
</dbReference>
<dbReference type="Gene3D" id="3.90.215.10">
    <property type="entry name" value="Gamma Fibrinogen, chain A, domain 1"/>
    <property type="match status" value="1"/>
</dbReference>
<dbReference type="InterPro" id="IPR037579">
    <property type="entry name" value="FIB_ANG-like"/>
</dbReference>
<dbReference type="InterPro" id="IPR036056">
    <property type="entry name" value="Fibrinogen-like_C"/>
</dbReference>
<dbReference type="InterPro" id="IPR014716">
    <property type="entry name" value="Fibrinogen_a/b/g_C_1"/>
</dbReference>
<dbReference type="InterPro" id="IPR002181">
    <property type="entry name" value="Fibrinogen_a/b/g_C_dom"/>
</dbReference>
<dbReference type="InterPro" id="IPR020837">
    <property type="entry name" value="Fibrinogen_CS"/>
</dbReference>
<dbReference type="NCBIfam" id="NF040941">
    <property type="entry name" value="GGGWT_bact"/>
    <property type="match status" value="1"/>
</dbReference>
<dbReference type="PANTHER" id="PTHR47221">
    <property type="entry name" value="FIBRINOGEN ALPHA CHAIN"/>
    <property type="match status" value="1"/>
</dbReference>
<dbReference type="PANTHER" id="PTHR47221:SF5">
    <property type="entry name" value="FIBRINOGEN C-TERMINAL DOMAIN-CONTAINING PROTEIN"/>
    <property type="match status" value="1"/>
</dbReference>
<dbReference type="Pfam" id="PF00147">
    <property type="entry name" value="Fibrinogen_C"/>
    <property type="match status" value="1"/>
</dbReference>
<dbReference type="SMART" id="SM00186">
    <property type="entry name" value="FBG"/>
    <property type="match status" value="1"/>
</dbReference>
<dbReference type="SUPFAM" id="SSF56496">
    <property type="entry name" value="Fibrinogen C-terminal domain-like"/>
    <property type="match status" value="1"/>
</dbReference>
<dbReference type="PROSITE" id="PS00514">
    <property type="entry name" value="FIBRINOGEN_C_1"/>
    <property type="match status" value="1"/>
</dbReference>
<dbReference type="PROSITE" id="PS51406">
    <property type="entry name" value="FIBRINOGEN_C_2"/>
    <property type="match status" value="1"/>
</dbReference>
<accession>O95841</accession>
<accession>Q5T5Z5</accession>
<organism>
    <name type="scientific">Homo sapiens</name>
    <name type="common">Human</name>
    <dbReference type="NCBI Taxonomy" id="9606"/>
    <lineage>
        <taxon>Eukaryota</taxon>
        <taxon>Metazoa</taxon>
        <taxon>Chordata</taxon>
        <taxon>Craniata</taxon>
        <taxon>Vertebrata</taxon>
        <taxon>Euteleostomi</taxon>
        <taxon>Mammalia</taxon>
        <taxon>Eutheria</taxon>
        <taxon>Euarchontoglires</taxon>
        <taxon>Primates</taxon>
        <taxon>Haplorrhini</taxon>
        <taxon>Catarrhini</taxon>
        <taxon>Hominidae</taxon>
        <taxon>Homo</taxon>
    </lineage>
</organism>